<feature type="chain" id="PRO_0000237309" description="DNA-directed RNA polymerase subunit beta">
    <location>
        <begin position="1"/>
        <end position="1301"/>
    </location>
</feature>
<keyword id="KW-0240">DNA-directed RNA polymerase</keyword>
<keyword id="KW-0548">Nucleotidyltransferase</keyword>
<keyword id="KW-1185">Reference proteome</keyword>
<keyword id="KW-0804">Transcription</keyword>
<keyword id="KW-0808">Transferase</keyword>
<protein>
    <recommendedName>
        <fullName evidence="1">DNA-directed RNA polymerase subunit beta</fullName>
        <shortName evidence="1">RNAP subunit beta</shortName>
        <ecNumber evidence="1">2.7.7.6</ecNumber>
    </recommendedName>
    <alternativeName>
        <fullName evidence="1">RNA polymerase subunit beta</fullName>
    </alternativeName>
    <alternativeName>
        <fullName evidence="1">Transcriptase subunit beta</fullName>
    </alternativeName>
</protein>
<sequence length="1301" mass="145416">MADATSTPSIDFSKIQSVIEAPDLLKVQLDSFHNFIQDSVPLAKRREQGLEKVLRSAFPITDTRGLYLLEYISYSFDKPKYTVEDCIERGLTYDVSLKVKLKLSYKDEADETDWKETIQQEVYLGRIPYMTERGTFIVNGAERVVVAQLHRSPGVVFSEAVHPNGKKMYSAKIVPTRGSWIEFQTDINNQIFVYIDQKKNFLVTALLRAIGFTRDEDILGLFDLVEEVPMKAAKRERLVGQYLASDIVDMQTGEVVSARTAITEEVFEQIQAAGYKSVKIMKSFNGSDKGQDKSIVINTILNDSSATEEEALEIVYEELRANEAPDIDAARSFLERTFFNQKKYDLGEVGRYRIGKKLSREFSEMDEYLGGKGELKQLSDTIHQKILQTIQSFSDEPIGEEVLVLTHLDIIAVINYLIKLVNGQAEVDDVDHLANRRVRSVGEQLAAQFVIGLARMGKNVREKLNSRDSDKIAPADLINARTVSSVVSSFFATSQLSQFMDQTNPLAEMTNKRRVSALGPGGLTRERAGFEVRDVHYTHYGRLCPIETPEGPNIGLISSLSVYAEINDKGFIQTPYRVVEKGHVTDTVVMLSAEDEENKITVPVSIPIDANNNIAVESVQARTKGDYPLVPSEDVNYMDVSPVQIVSAAAALIPFLEHDDGNRALMGANMQRQAVPLLVSEAPVVGTGMEAKVARDSRSVILGEGPGFVEEVTSEFIKVRYDIDTENNEHMSLLDPDEGLKTYRMIKFKRSNQDTCISQRPIVKNGQKVDKGTVLADSSSTEDGELALGKNVLVAFMPWRGYNFEDAIILSERLVYDDVFTSIHVHEFEANVRDTKRGEEQFTRDIYNVSDEALRNLDENGIVRIGAEVKERDILVGKITPKGESDPTPEEKLLRAIFGDKSSDVKDASMHVPAGMKGIVIKTKLFSRKKKVGMDVKEKLELIDARFERREIELRKSFEKWLRQMLQGKKVKGLTSDKGKVLADEGAAFDDALLAKFSSQPFLESIDFTLGVTGTKKVDEAVIRLVKEFRFKLKDLADERDNEKYKVNVGDELPPGIEELAKVYIAQKRKIQVGDKMAGRHGNKGVVGKILPIEDMPFMADGTPVDIVLNPLGVPSRMNIGQLYETSLGWAAKKLGVKFKTPIFNGATYEEVQAELERAGLPMHGKVRLYDGRTGEQFDDEVTVGYIYMLKLSHLVDDKIHARSTGPYSLITQQPLGGKAQFGGQRFGEMEVWALEAYGAANILREMLTVKSDDVVGRNKTYEAIVKGQNLPEPGIPESFNVLIRELQGLGLEIRIDDRVP</sequence>
<evidence type="ECO:0000255" key="1">
    <source>
        <dbReference type="HAMAP-Rule" id="MF_01321"/>
    </source>
</evidence>
<organism>
    <name type="scientific">Chlorobium luteolum (strain DSM 273 / BCRC 81028 / 2530)</name>
    <name type="common">Pelodictyon luteolum</name>
    <dbReference type="NCBI Taxonomy" id="319225"/>
    <lineage>
        <taxon>Bacteria</taxon>
        <taxon>Pseudomonadati</taxon>
        <taxon>Chlorobiota</taxon>
        <taxon>Chlorobiia</taxon>
        <taxon>Chlorobiales</taxon>
        <taxon>Chlorobiaceae</taxon>
        <taxon>Chlorobium/Pelodictyon group</taxon>
        <taxon>Pelodictyon</taxon>
    </lineage>
</organism>
<name>RPOB_CHLL3</name>
<comment type="function">
    <text evidence="1">DNA-dependent RNA polymerase catalyzes the transcription of DNA into RNA using the four ribonucleoside triphosphates as substrates.</text>
</comment>
<comment type="catalytic activity">
    <reaction evidence="1">
        <text>RNA(n) + a ribonucleoside 5'-triphosphate = RNA(n+1) + diphosphate</text>
        <dbReference type="Rhea" id="RHEA:21248"/>
        <dbReference type="Rhea" id="RHEA-COMP:14527"/>
        <dbReference type="Rhea" id="RHEA-COMP:17342"/>
        <dbReference type="ChEBI" id="CHEBI:33019"/>
        <dbReference type="ChEBI" id="CHEBI:61557"/>
        <dbReference type="ChEBI" id="CHEBI:140395"/>
        <dbReference type="EC" id="2.7.7.6"/>
    </reaction>
</comment>
<comment type="subunit">
    <text evidence="1">The RNAP catalytic core consists of 2 alpha, 1 beta, 1 beta' and 1 omega subunit. When a sigma factor is associated with the core the holoenzyme is formed, which can initiate transcription.</text>
</comment>
<comment type="similarity">
    <text evidence="1">Belongs to the RNA polymerase beta chain family.</text>
</comment>
<reference key="1">
    <citation type="submission" date="2005-08" db="EMBL/GenBank/DDBJ databases">
        <title>Complete sequence of Pelodictyon luteolum DSM 273.</title>
        <authorList>
            <consortium name="US DOE Joint Genome Institute"/>
            <person name="Copeland A."/>
            <person name="Lucas S."/>
            <person name="Lapidus A."/>
            <person name="Barry K."/>
            <person name="Detter J.C."/>
            <person name="Glavina T."/>
            <person name="Hammon N."/>
            <person name="Israni S."/>
            <person name="Pitluck S."/>
            <person name="Bryant D."/>
            <person name="Schmutz J."/>
            <person name="Larimer F."/>
            <person name="Land M."/>
            <person name="Kyrpides N."/>
            <person name="Ivanova N."/>
            <person name="Richardson P."/>
        </authorList>
    </citation>
    <scope>NUCLEOTIDE SEQUENCE [LARGE SCALE GENOMIC DNA]</scope>
    <source>
        <strain>DSM 273 / BCRC 81028 / 2530</strain>
    </source>
</reference>
<dbReference type="EC" id="2.7.7.6" evidence="1"/>
<dbReference type="EMBL" id="CP000096">
    <property type="protein sequence ID" value="ABB24804.1"/>
    <property type="molecule type" value="Genomic_DNA"/>
</dbReference>
<dbReference type="RefSeq" id="WP_011358674.1">
    <property type="nucleotide sequence ID" value="NC_007512.1"/>
</dbReference>
<dbReference type="SMR" id="Q3B1H7"/>
<dbReference type="STRING" id="319225.Plut_1962"/>
<dbReference type="KEGG" id="plt:Plut_1962"/>
<dbReference type="eggNOG" id="COG0085">
    <property type="taxonomic scope" value="Bacteria"/>
</dbReference>
<dbReference type="HOGENOM" id="CLU_000524_4_1_10"/>
<dbReference type="Proteomes" id="UP000002709">
    <property type="component" value="Chromosome"/>
</dbReference>
<dbReference type="GO" id="GO:0000428">
    <property type="term" value="C:DNA-directed RNA polymerase complex"/>
    <property type="evidence" value="ECO:0007669"/>
    <property type="project" value="UniProtKB-KW"/>
</dbReference>
<dbReference type="GO" id="GO:0003677">
    <property type="term" value="F:DNA binding"/>
    <property type="evidence" value="ECO:0007669"/>
    <property type="project" value="UniProtKB-UniRule"/>
</dbReference>
<dbReference type="GO" id="GO:0003899">
    <property type="term" value="F:DNA-directed RNA polymerase activity"/>
    <property type="evidence" value="ECO:0007669"/>
    <property type="project" value="UniProtKB-UniRule"/>
</dbReference>
<dbReference type="GO" id="GO:0032549">
    <property type="term" value="F:ribonucleoside binding"/>
    <property type="evidence" value="ECO:0007669"/>
    <property type="project" value="InterPro"/>
</dbReference>
<dbReference type="GO" id="GO:0006351">
    <property type="term" value="P:DNA-templated transcription"/>
    <property type="evidence" value="ECO:0007669"/>
    <property type="project" value="UniProtKB-UniRule"/>
</dbReference>
<dbReference type="CDD" id="cd00653">
    <property type="entry name" value="RNA_pol_B_RPB2"/>
    <property type="match status" value="1"/>
</dbReference>
<dbReference type="Gene3D" id="2.40.50.100">
    <property type="match status" value="1"/>
</dbReference>
<dbReference type="Gene3D" id="2.40.50.150">
    <property type="match status" value="1"/>
</dbReference>
<dbReference type="Gene3D" id="3.90.1100.10">
    <property type="match status" value="2"/>
</dbReference>
<dbReference type="Gene3D" id="2.30.150.10">
    <property type="entry name" value="DNA-directed RNA polymerase, beta subunit, external 1 domain"/>
    <property type="match status" value="1"/>
</dbReference>
<dbReference type="Gene3D" id="2.40.270.10">
    <property type="entry name" value="DNA-directed RNA polymerase, subunit 2, domain 6"/>
    <property type="match status" value="3"/>
</dbReference>
<dbReference type="Gene3D" id="3.90.1800.10">
    <property type="entry name" value="RNA polymerase alpha subunit dimerisation domain"/>
    <property type="match status" value="1"/>
</dbReference>
<dbReference type="Gene3D" id="3.90.1110.10">
    <property type="entry name" value="RNA polymerase Rpb2, domain 2"/>
    <property type="match status" value="2"/>
</dbReference>
<dbReference type="HAMAP" id="MF_01321">
    <property type="entry name" value="RNApol_bact_RpoB"/>
    <property type="match status" value="1"/>
</dbReference>
<dbReference type="InterPro" id="IPR042107">
    <property type="entry name" value="DNA-dir_RNA_pol_bsu_ext_1_sf"/>
</dbReference>
<dbReference type="InterPro" id="IPR019462">
    <property type="entry name" value="DNA-dir_RNA_pol_bsu_external_1"/>
</dbReference>
<dbReference type="InterPro" id="IPR015712">
    <property type="entry name" value="DNA-dir_RNA_pol_su2"/>
</dbReference>
<dbReference type="InterPro" id="IPR007120">
    <property type="entry name" value="DNA-dir_RNAP_su2_dom"/>
</dbReference>
<dbReference type="InterPro" id="IPR037033">
    <property type="entry name" value="DNA-dir_RNAP_su2_hyb_sf"/>
</dbReference>
<dbReference type="InterPro" id="IPR010243">
    <property type="entry name" value="RNA_pol_bsu_bac"/>
</dbReference>
<dbReference type="InterPro" id="IPR007121">
    <property type="entry name" value="RNA_pol_bsu_CS"/>
</dbReference>
<dbReference type="InterPro" id="IPR007644">
    <property type="entry name" value="RNA_pol_bsu_protrusion"/>
</dbReference>
<dbReference type="InterPro" id="IPR007642">
    <property type="entry name" value="RNA_pol_Rpb2_2"/>
</dbReference>
<dbReference type="InterPro" id="IPR037034">
    <property type="entry name" value="RNA_pol_Rpb2_2_sf"/>
</dbReference>
<dbReference type="InterPro" id="IPR007645">
    <property type="entry name" value="RNA_pol_Rpb2_3"/>
</dbReference>
<dbReference type="InterPro" id="IPR007641">
    <property type="entry name" value="RNA_pol_Rpb2_7"/>
</dbReference>
<dbReference type="InterPro" id="IPR014724">
    <property type="entry name" value="RNA_pol_RPB2_OB-fold"/>
</dbReference>
<dbReference type="NCBIfam" id="NF001616">
    <property type="entry name" value="PRK00405.1"/>
    <property type="match status" value="1"/>
</dbReference>
<dbReference type="NCBIfam" id="TIGR02013">
    <property type="entry name" value="rpoB"/>
    <property type="match status" value="1"/>
</dbReference>
<dbReference type="PANTHER" id="PTHR20856">
    <property type="entry name" value="DNA-DIRECTED RNA POLYMERASE I SUBUNIT 2"/>
    <property type="match status" value="1"/>
</dbReference>
<dbReference type="Pfam" id="PF04563">
    <property type="entry name" value="RNA_pol_Rpb2_1"/>
    <property type="match status" value="1"/>
</dbReference>
<dbReference type="Pfam" id="PF04561">
    <property type="entry name" value="RNA_pol_Rpb2_2"/>
    <property type="match status" value="3"/>
</dbReference>
<dbReference type="Pfam" id="PF04565">
    <property type="entry name" value="RNA_pol_Rpb2_3"/>
    <property type="match status" value="1"/>
</dbReference>
<dbReference type="Pfam" id="PF10385">
    <property type="entry name" value="RNA_pol_Rpb2_45"/>
    <property type="match status" value="1"/>
</dbReference>
<dbReference type="Pfam" id="PF00562">
    <property type="entry name" value="RNA_pol_Rpb2_6"/>
    <property type="match status" value="1"/>
</dbReference>
<dbReference type="Pfam" id="PF04560">
    <property type="entry name" value="RNA_pol_Rpb2_7"/>
    <property type="match status" value="1"/>
</dbReference>
<dbReference type="SUPFAM" id="SSF64484">
    <property type="entry name" value="beta and beta-prime subunits of DNA dependent RNA-polymerase"/>
    <property type="match status" value="1"/>
</dbReference>
<dbReference type="PROSITE" id="PS01166">
    <property type="entry name" value="RNA_POL_BETA"/>
    <property type="match status" value="1"/>
</dbReference>
<proteinExistence type="inferred from homology"/>
<accession>Q3B1H7</accession>
<gene>
    <name evidence="1" type="primary">rpoB</name>
    <name type="ordered locus">Plut_1962</name>
</gene>